<evidence type="ECO:0000250" key="1"/>
<evidence type="ECO:0000250" key="2">
    <source>
        <dbReference type="UniProtKB" id="P04150"/>
    </source>
</evidence>
<evidence type="ECO:0000250" key="3">
    <source>
        <dbReference type="UniProtKB" id="P06536"/>
    </source>
</evidence>
<evidence type="ECO:0000250" key="4">
    <source>
        <dbReference type="UniProtKB" id="P06537"/>
    </source>
</evidence>
<evidence type="ECO:0000255" key="5">
    <source>
        <dbReference type="PROSITE-ProRule" id="PRU00407"/>
    </source>
</evidence>
<evidence type="ECO:0000255" key="6">
    <source>
        <dbReference type="PROSITE-ProRule" id="PRU01189"/>
    </source>
</evidence>
<evidence type="ECO:0000256" key="7">
    <source>
        <dbReference type="SAM" id="MobiDB-lite"/>
    </source>
</evidence>
<evidence type="ECO:0000305" key="8"/>
<protein>
    <recommendedName>
        <fullName>Glucocorticoid receptor</fullName>
        <shortName>GR</shortName>
    </recommendedName>
    <alternativeName>
        <fullName>Nuclear receptor subfamily 3 group C member 1</fullName>
    </alternativeName>
</protein>
<sequence length="777" mass="85666">MDSKESLTPGREENPSSVLAQERGNVMDFYKTLRGGATVKVSASSPSLAVASQSDSKQRRLLVDFPKGSVSNAQQPDLSKAVSLSMGLYMGETETKVMGNDLGFPQQGQISLSSGETDLKLLEESIANLNRSTSVPENPKSSASTAVSAAPTEKEFPKTHSDISSEQQHLKGQTGTNGGNVKLYTTDQSTFDILQDLEFSSGSPGKETNESPWRSDLLIDENCLLSPLAGEDDSFLLEGNSNEDCKPLILPDTKPKIKDNGDLVLSSPSNVTLPQVKTEKEDFIELCTPGVIKQEKLGTVYCQAGFPGANIIGNKMSAISVHGVSTSGGQMYHYDMNTASLSQQQDQKPIFNVIPPIPVGSENWNRCQGSGDDNLTSLGTLNFPGRTVFSNGYSSPSMRPDVSSPPSSSSTATTGPPPKLCLVCSDEASGCHYGVLTCGSCKVFFKRAVEGQHNYLCAGRNDCIIDKIRRKNCPACRYRKCLQAGMNLEARKTKKKIKGIQQATTGVSQETPENPANKTIVPATLPQLTPTLVSLLEVIEPEVLYAGYDSSVPDSTWRIMTTLNMLGGRQVIAAVKWAKAIPGFRNLHLDDQMTLLQYSWMFLMAFALGWRSYRQSSANLLCFAPDLIINEQRMTLPCMYDQCKHMLYVSSELHRLQVSYEEYLCMKTLLLLSSVPKDGLKSQELFDEIRMTYIKELGKAIVKREGNSSQNWQRFYQLTKLLDSMHEVVENLLNYCFQTFLDKTMSIEFPEMLAEIITNQIPKYSNGNIKKLLFHQK</sequence>
<name>GCR_PONAB</name>
<dbReference type="EMBL" id="CR859339">
    <property type="protein sequence ID" value="CAH91515.1"/>
    <property type="molecule type" value="mRNA"/>
</dbReference>
<dbReference type="EMBL" id="CR860087">
    <property type="protein sequence ID" value="CAH92233.1"/>
    <property type="molecule type" value="mRNA"/>
</dbReference>
<dbReference type="RefSeq" id="NP_001126305.1">
    <property type="nucleotide sequence ID" value="NM_001132833.1"/>
</dbReference>
<dbReference type="RefSeq" id="NP_001128816.2">
    <property type="nucleotide sequence ID" value="NM_001135344.2"/>
</dbReference>
<dbReference type="RefSeq" id="XP_009239415.1">
    <property type="nucleotide sequence ID" value="XM_009241140.1"/>
</dbReference>
<dbReference type="RefSeq" id="XP_024102578.3">
    <property type="nucleotide sequence ID" value="XM_024246810.3"/>
</dbReference>
<dbReference type="RefSeq" id="XP_024102579.3">
    <property type="nucleotide sequence ID" value="XM_024246811.3"/>
</dbReference>
<dbReference type="RefSeq" id="XP_054411205.2">
    <property type="nucleotide sequence ID" value="XM_054555230.2"/>
</dbReference>
<dbReference type="SMR" id="Q5R9P5"/>
<dbReference type="FunCoup" id="Q5R9P5">
    <property type="interactions" value="2475"/>
</dbReference>
<dbReference type="STRING" id="9601.ENSPPYP00000017784"/>
<dbReference type="Ensembl" id="ENSPPYT00000041540.1">
    <property type="protein sequence ID" value="ENSPPYP00000032621.1"/>
    <property type="gene ID" value="ENSPPYG00000015900.3"/>
</dbReference>
<dbReference type="GeneID" id="100189725"/>
<dbReference type="KEGG" id="pon:100189725"/>
<dbReference type="CTD" id="2908"/>
<dbReference type="eggNOG" id="KOG3575">
    <property type="taxonomic scope" value="Eukaryota"/>
</dbReference>
<dbReference type="GeneTree" id="ENSGT00940000156385"/>
<dbReference type="HOGENOM" id="CLU_020317_0_0_1"/>
<dbReference type="InParanoid" id="Q5R9P5"/>
<dbReference type="OrthoDB" id="5789523at2759"/>
<dbReference type="TreeFam" id="TF106510"/>
<dbReference type="Proteomes" id="UP000001595">
    <property type="component" value="Chromosome 5"/>
</dbReference>
<dbReference type="GO" id="GO:0005813">
    <property type="term" value="C:centrosome"/>
    <property type="evidence" value="ECO:0007669"/>
    <property type="project" value="UniProtKB-SubCell"/>
</dbReference>
<dbReference type="GO" id="GO:0005694">
    <property type="term" value="C:chromosome"/>
    <property type="evidence" value="ECO:0007669"/>
    <property type="project" value="UniProtKB-SubCell"/>
</dbReference>
<dbReference type="GO" id="GO:0005737">
    <property type="term" value="C:cytoplasm"/>
    <property type="evidence" value="ECO:0000250"/>
    <property type="project" value="UniProtKB"/>
</dbReference>
<dbReference type="GO" id="GO:0005739">
    <property type="term" value="C:mitochondrion"/>
    <property type="evidence" value="ECO:0007669"/>
    <property type="project" value="UniProtKB-SubCell"/>
</dbReference>
<dbReference type="GO" id="GO:0016607">
    <property type="term" value="C:nuclear speck"/>
    <property type="evidence" value="ECO:0000250"/>
    <property type="project" value="UniProtKB"/>
</dbReference>
<dbReference type="GO" id="GO:0005634">
    <property type="term" value="C:nucleus"/>
    <property type="evidence" value="ECO:0000250"/>
    <property type="project" value="UniProtKB"/>
</dbReference>
<dbReference type="GO" id="GO:0005819">
    <property type="term" value="C:spindle"/>
    <property type="evidence" value="ECO:0007669"/>
    <property type="project" value="UniProtKB-SubCell"/>
</dbReference>
<dbReference type="GO" id="GO:0003700">
    <property type="term" value="F:DNA-binding transcription factor activity"/>
    <property type="evidence" value="ECO:0000250"/>
    <property type="project" value="UniProtKB"/>
</dbReference>
<dbReference type="GO" id="GO:0004883">
    <property type="term" value="F:nuclear glucocorticoid receptor activity"/>
    <property type="evidence" value="ECO:0007669"/>
    <property type="project" value="InterPro"/>
</dbReference>
<dbReference type="GO" id="GO:0004879">
    <property type="term" value="F:nuclear receptor activity"/>
    <property type="evidence" value="ECO:0000250"/>
    <property type="project" value="UniProtKB"/>
</dbReference>
<dbReference type="GO" id="GO:1990837">
    <property type="term" value="F:sequence-specific double-stranded DNA binding"/>
    <property type="evidence" value="ECO:0007669"/>
    <property type="project" value="UniProtKB-ARBA"/>
</dbReference>
<dbReference type="GO" id="GO:0005496">
    <property type="term" value="F:steroid binding"/>
    <property type="evidence" value="ECO:0000250"/>
    <property type="project" value="UniProtKB"/>
</dbReference>
<dbReference type="GO" id="GO:1990239">
    <property type="term" value="F:steroid hormone binding"/>
    <property type="evidence" value="ECO:0000250"/>
    <property type="project" value="UniProtKB"/>
</dbReference>
<dbReference type="GO" id="GO:0008270">
    <property type="term" value="F:zinc ion binding"/>
    <property type="evidence" value="ECO:0007669"/>
    <property type="project" value="UniProtKB-KW"/>
</dbReference>
<dbReference type="GO" id="GO:0071385">
    <property type="term" value="P:cellular response to glucocorticoid stimulus"/>
    <property type="evidence" value="ECO:0000250"/>
    <property type="project" value="UniProtKB"/>
</dbReference>
<dbReference type="GO" id="GO:0071383">
    <property type="term" value="P:cellular response to steroid hormone stimulus"/>
    <property type="evidence" value="ECO:0000250"/>
    <property type="project" value="UniProtKB"/>
</dbReference>
<dbReference type="GO" id="GO:0006325">
    <property type="term" value="P:chromatin organization"/>
    <property type="evidence" value="ECO:0007669"/>
    <property type="project" value="UniProtKB-KW"/>
</dbReference>
<dbReference type="GO" id="GO:0045944">
    <property type="term" value="P:positive regulation of transcription by RNA polymerase II"/>
    <property type="evidence" value="ECO:0000250"/>
    <property type="project" value="UniProtKB"/>
</dbReference>
<dbReference type="CDD" id="cd07172">
    <property type="entry name" value="NR_DBD_GR_PR"/>
    <property type="match status" value="1"/>
</dbReference>
<dbReference type="CDD" id="cd07076">
    <property type="entry name" value="NR_LBD_GR"/>
    <property type="match status" value="1"/>
</dbReference>
<dbReference type="FunFam" id="1.10.565.10:FF:000004">
    <property type="entry name" value="Androgen receptor variant"/>
    <property type="match status" value="1"/>
</dbReference>
<dbReference type="FunFam" id="3.30.50.10:FF:000022">
    <property type="entry name" value="glucocorticoid receptor isoform X1"/>
    <property type="match status" value="1"/>
</dbReference>
<dbReference type="Gene3D" id="3.30.50.10">
    <property type="entry name" value="Erythroid Transcription Factor GATA-1, subunit A"/>
    <property type="match status" value="1"/>
</dbReference>
<dbReference type="Gene3D" id="1.10.565.10">
    <property type="entry name" value="Retinoid X Receptor"/>
    <property type="match status" value="1"/>
</dbReference>
<dbReference type="InterPro" id="IPR001409">
    <property type="entry name" value="Glcrtcd_rcpt"/>
</dbReference>
<dbReference type="InterPro" id="IPR035500">
    <property type="entry name" value="NHR-like_dom_sf"/>
</dbReference>
<dbReference type="InterPro" id="IPR000536">
    <property type="entry name" value="Nucl_hrmn_rcpt_lig-bd"/>
</dbReference>
<dbReference type="InterPro" id="IPR050200">
    <property type="entry name" value="Nuclear_hormone_rcpt_NR3"/>
</dbReference>
<dbReference type="InterPro" id="IPR001723">
    <property type="entry name" value="Nuclear_hrmn_rcpt"/>
</dbReference>
<dbReference type="InterPro" id="IPR001628">
    <property type="entry name" value="Znf_hrmn_rcpt"/>
</dbReference>
<dbReference type="InterPro" id="IPR013088">
    <property type="entry name" value="Znf_NHR/GATA"/>
</dbReference>
<dbReference type="PANTHER" id="PTHR48092">
    <property type="entry name" value="KNIRPS-RELATED PROTEIN-RELATED"/>
    <property type="match status" value="1"/>
</dbReference>
<dbReference type="Pfam" id="PF02155">
    <property type="entry name" value="GCR"/>
    <property type="match status" value="1"/>
</dbReference>
<dbReference type="Pfam" id="PF00104">
    <property type="entry name" value="Hormone_recep"/>
    <property type="match status" value="1"/>
</dbReference>
<dbReference type="Pfam" id="PF00105">
    <property type="entry name" value="zf-C4"/>
    <property type="match status" value="1"/>
</dbReference>
<dbReference type="PRINTS" id="PR00528">
    <property type="entry name" value="GLCORTICOIDR"/>
</dbReference>
<dbReference type="PRINTS" id="PR00398">
    <property type="entry name" value="STRDHORMONER"/>
</dbReference>
<dbReference type="PRINTS" id="PR00047">
    <property type="entry name" value="STROIDFINGER"/>
</dbReference>
<dbReference type="SMART" id="SM00430">
    <property type="entry name" value="HOLI"/>
    <property type="match status" value="1"/>
</dbReference>
<dbReference type="SMART" id="SM00399">
    <property type="entry name" value="ZnF_C4"/>
    <property type="match status" value="1"/>
</dbReference>
<dbReference type="SUPFAM" id="SSF57716">
    <property type="entry name" value="Glucocorticoid receptor-like (DNA-binding domain)"/>
    <property type="match status" value="1"/>
</dbReference>
<dbReference type="SUPFAM" id="SSF48508">
    <property type="entry name" value="Nuclear receptor ligand-binding domain"/>
    <property type="match status" value="1"/>
</dbReference>
<dbReference type="PROSITE" id="PS51843">
    <property type="entry name" value="NR_LBD"/>
    <property type="match status" value="1"/>
</dbReference>
<dbReference type="PROSITE" id="PS00031">
    <property type="entry name" value="NUCLEAR_REC_DBD_1"/>
    <property type="match status" value="1"/>
</dbReference>
<dbReference type="PROSITE" id="PS51030">
    <property type="entry name" value="NUCLEAR_REC_DBD_2"/>
    <property type="match status" value="1"/>
</dbReference>
<reference key="1">
    <citation type="submission" date="2004-11" db="EMBL/GenBank/DDBJ databases">
        <authorList>
            <consortium name="The German cDNA consortium"/>
        </authorList>
    </citation>
    <scope>NUCLEOTIDE SEQUENCE [LARGE SCALE MRNA]</scope>
    <source>
        <tissue>Brain cortex</tissue>
        <tissue>Kidney</tissue>
    </source>
</reference>
<accession>Q5R9P5</accession>
<accession>Q5R7M7</accession>
<organism>
    <name type="scientific">Pongo abelii</name>
    <name type="common">Sumatran orangutan</name>
    <name type="synonym">Pongo pygmaeus abelii</name>
    <dbReference type="NCBI Taxonomy" id="9601"/>
    <lineage>
        <taxon>Eukaryota</taxon>
        <taxon>Metazoa</taxon>
        <taxon>Chordata</taxon>
        <taxon>Craniata</taxon>
        <taxon>Vertebrata</taxon>
        <taxon>Euteleostomi</taxon>
        <taxon>Mammalia</taxon>
        <taxon>Eutheria</taxon>
        <taxon>Euarchontoglires</taxon>
        <taxon>Primates</taxon>
        <taxon>Haplorrhini</taxon>
        <taxon>Catarrhini</taxon>
        <taxon>Hominidae</taxon>
        <taxon>Pongo</taxon>
    </lineage>
</organism>
<keyword id="KW-0007">Acetylation</keyword>
<keyword id="KW-0156">Chromatin regulator</keyword>
<keyword id="KW-0158">Chromosome</keyword>
<keyword id="KW-0963">Cytoplasm</keyword>
<keyword id="KW-0206">Cytoskeleton</keyword>
<keyword id="KW-0238">DNA-binding</keyword>
<keyword id="KW-1017">Isopeptide bond</keyword>
<keyword id="KW-0446">Lipid-binding</keyword>
<keyword id="KW-0479">Metal-binding</keyword>
<keyword id="KW-0488">Methylation</keyword>
<keyword id="KW-0496">Mitochondrion</keyword>
<keyword id="KW-0539">Nucleus</keyword>
<keyword id="KW-0597">Phosphoprotein</keyword>
<keyword id="KW-0675">Receptor</keyword>
<keyword id="KW-1185">Reference proteome</keyword>
<keyword id="KW-0754">Steroid-binding</keyword>
<keyword id="KW-0804">Transcription</keyword>
<keyword id="KW-0805">Transcription regulation</keyword>
<keyword id="KW-0832">Ubl conjugation</keyword>
<keyword id="KW-0862">Zinc</keyword>
<keyword id="KW-0863">Zinc-finger</keyword>
<feature type="chain" id="PRO_0000053672" description="Glucocorticoid receptor">
    <location>
        <begin position="1"/>
        <end position="777"/>
    </location>
</feature>
<feature type="domain" description="NR LBD" evidence="6">
    <location>
        <begin position="524"/>
        <end position="758"/>
    </location>
</feature>
<feature type="DNA-binding region" description="Nuclear receptor" evidence="5">
    <location>
        <begin position="421"/>
        <end position="486"/>
    </location>
</feature>
<feature type="zinc finger region" description="NR C4-type" evidence="5">
    <location>
        <begin position="421"/>
        <end position="441"/>
    </location>
</feature>
<feature type="zinc finger region" description="NR C4-type" evidence="5">
    <location>
        <begin position="457"/>
        <end position="476"/>
    </location>
</feature>
<feature type="region of interest" description="Modulating" evidence="1">
    <location>
        <begin position="1"/>
        <end position="420"/>
    </location>
</feature>
<feature type="region of interest" description="Disordered" evidence="7">
    <location>
        <begin position="1"/>
        <end position="23"/>
    </location>
</feature>
<feature type="region of interest" description="Disordered" evidence="7">
    <location>
        <begin position="130"/>
        <end position="183"/>
    </location>
</feature>
<feature type="region of interest" description="Disordered" evidence="7">
    <location>
        <begin position="394"/>
        <end position="415"/>
    </location>
</feature>
<feature type="region of interest" description="Interaction with CLOCK" evidence="1">
    <location>
        <begin position="485"/>
        <end position="777"/>
    </location>
</feature>
<feature type="region of interest" description="Hinge" evidence="1">
    <location>
        <begin position="487"/>
        <end position="523"/>
    </location>
</feature>
<feature type="region of interest" description="Interaction with CRY1" evidence="1">
    <location>
        <begin position="532"/>
        <end position="697"/>
    </location>
</feature>
<feature type="compositionally biased region" description="Basic and acidic residues" evidence="7">
    <location>
        <begin position="1"/>
        <end position="14"/>
    </location>
</feature>
<feature type="compositionally biased region" description="Polar residues" evidence="7">
    <location>
        <begin position="130"/>
        <end position="140"/>
    </location>
</feature>
<feature type="compositionally biased region" description="Low complexity" evidence="7">
    <location>
        <begin position="141"/>
        <end position="150"/>
    </location>
</feature>
<feature type="compositionally biased region" description="Basic and acidic residues" evidence="7">
    <location>
        <begin position="152"/>
        <end position="163"/>
    </location>
</feature>
<feature type="compositionally biased region" description="Polar residues" evidence="7">
    <location>
        <begin position="164"/>
        <end position="174"/>
    </location>
</feature>
<feature type="compositionally biased region" description="Low complexity" evidence="7">
    <location>
        <begin position="394"/>
        <end position="414"/>
    </location>
</feature>
<feature type="modified residue" description="Phosphothreonine" evidence="2">
    <location>
        <position position="8"/>
    </location>
</feature>
<feature type="modified residue" description="Omega-N-methylarginine" evidence="4">
    <location>
        <position position="23"/>
    </location>
</feature>
<feature type="modified residue" description="Phosphoserine" evidence="2">
    <location>
        <position position="45"/>
    </location>
</feature>
<feature type="modified residue" description="Phosphoserine" evidence="4">
    <location>
        <position position="113"/>
    </location>
</feature>
<feature type="modified residue" description="Phosphoserine" evidence="2">
    <location>
        <position position="134"/>
    </location>
</feature>
<feature type="modified residue" description="Phosphoserine" evidence="4">
    <location>
        <position position="141"/>
    </location>
</feature>
<feature type="modified residue" description="Phosphoserine" evidence="2">
    <location>
        <position position="203"/>
    </location>
</feature>
<feature type="modified residue" description="Phosphoserine" evidence="2">
    <location>
        <position position="211"/>
    </location>
</feature>
<feature type="modified residue" description="Phosphoserine" evidence="2">
    <location>
        <position position="226"/>
    </location>
</feature>
<feature type="modified residue" description="Phosphoserine" evidence="2">
    <location>
        <position position="267"/>
    </location>
</feature>
<feature type="modified residue" description="Phosphoserine" evidence="2">
    <location>
        <position position="404"/>
    </location>
</feature>
<feature type="modified residue" description="N6-acetyllysine" evidence="2">
    <location>
        <position position="480"/>
    </location>
</feature>
<feature type="modified residue" description="N6-acetyllysine" evidence="2">
    <location>
        <position position="492"/>
    </location>
</feature>
<feature type="modified residue" description="N6-acetyllysine" evidence="2">
    <location>
        <position position="494"/>
    </location>
</feature>
<feature type="modified residue" description="N6-acetyllysine" evidence="2">
    <location>
        <position position="495"/>
    </location>
</feature>
<feature type="cross-link" description="Glycyl lysine isopeptide (Lys-Gly) (interchain with G-Cter in SUMO2)" evidence="2">
    <location>
        <position position="258"/>
    </location>
</feature>
<feature type="cross-link" description="Glycyl lysine isopeptide (Lys-Gly) (interchain with G-Cter in SUMO); alternate" evidence="2">
    <location>
        <position position="277"/>
    </location>
</feature>
<feature type="cross-link" description="Glycyl lysine isopeptide (Lys-Gly) (interchain with G-Cter in SUMO2); alternate" evidence="2">
    <location>
        <position position="277"/>
    </location>
</feature>
<feature type="cross-link" description="Glycyl lysine isopeptide (Lys-Gly) (interchain with G-Cter in SUMO); alternate" evidence="2">
    <location>
        <position position="293"/>
    </location>
</feature>
<feature type="cross-link" description="Glycyl lysine isopeptide (Lys-Gly) (interchain with G-Cter in SUMO2); alternate" evidence="2">
    <location>
        <position position="293"/>
    </location>
</feature>
<feature type="cross-link" description="Glycyl lysine isopeptide (Lys-Gly) (interchain with G-Cter in ubiquitin)" evidence="4">
    <location>
        <position position="419"/>
    </location>
</feature>
<feature type="cross-link" description="Glycyl lysine isopeptide (Lys-Gly) (interchain with G-Cter in SUMO)" evidence="2">
    <location>
        <position position="703"/>
    </location>
</feature>
<feature type="sequence conflict" description="In Ref. 1; CAH91515." evidence="8" ref="1">
    <original>K</original>
    <variation>E</variation>
    <location>
        <position position="419"/>
    </location>
</feature>
<feature type="sequence conflict" description="In Ref. 1; CAH92233." evidence="8" ref="1">
    <original>G</original>
    <variation>GR</variation>
    <location>
        <position position="451"/>
    </location>
</feature>
<feature type="sequence conflict" description="In Ref. 1; CAH91515." evidence="8" ref="1">
    <original>I</original>
    <variation>M</variation>
    <location>
        <position position="497"/>
    </location>
</feature>
<feature type="sequence conflict" description="In Ref. 1; CAH92233." evidence="8" ref="1">
    <original>F</original>
    <variation>S</variation>
    <location>
        <position position="623"/>
    </location>
</feature>
<proteinExistence type="evidence at transcript level"/>
<gene>
    <name type="primary">NR3C1</name>
    <name type="synonym">GRL</name>
</gene>
<comment type="function">
    <text evidence="2 4">Receptor for glucocorticoids (GC). Has a dual mode of action: as a transcription factor that binds to glucocorticoid response elements (GRE), both for nuclear and mitochondrial DNA, and as a modulator of other transcription factors. Affects inflammatory responses, cellular proliferation and differentiation in target tissues. Involved in chromatin remodeling. Plays a role in rapid mRNA degradation by binding to the 5' UTR of target mRNAs and interacting with PNRC2 in a ligand-dependent manner which recruits the RNA helicase UPF1 and the mRNA-decapping enzyme DCP1A, leading to RNA decay. Could act as a coactivator for STAT5-dependent transcription upon growth hormone (GH) stimulation and could reveal an essential role of hepatic GR in the control of body growth. Mediates glucocorticoid-induced apoptosis. Promotes accurate chromosome segregation during mitosis. May act as a tumor suppressor. May play a negative role in adipogenesis through the regulation of lipolytic and antilipogenic gene expression.</text>
</comment>
<comment type="subunit">
    <text evidence="2 3 4">Heteromultimeric cytoplasmic complex with HSP90AA1, HSPA1A/HSPA1B, and FKBP5 or another immunophilin such as PPID, STIP1, or the immunophilin homolog PPP5C. Upon ligand binding FKBP5 dissociates from the complex and FKBP4 takes its place, thereby linking the complex to dynein and mediating transport to the nucleus, where the complex dissociates. Probably forms a complex composed of chaperones HSP90 and HSP70, co-chaperones CDC37, PPP5C, TSC1 and client protein TSC2, CDK4, AKT, RAF1 and NR3C1; this complex does not contain co-chaperones STIP1/HOP and PTGES3/p23. Directly interacts with UNC45A. Binds to DNA as a homodimer, and as heterodimer with NR3C2 or the retinoid X receptor. Binds STAT5A and STAT5B homodimers and heterodimers. Interacts with NRIP1, POU2F1, POU2F2 and TRIM28. Interacts with several coactivator complexes, including the SMARCA4 complex, CREBBP/EP300, TADA2L (Ada complex) and p160 coactivators such as NCOA2 and NCOA6. Interaction with BAG1 inhibits transactivation. Interacts with HEXIM1 and TGFB1I1. Interacts with NCOA1. Interacts with NCOA3, SMARCA4, SMARCC1, SMARCD1, and SMARCE1. Interacts with CLOCK, CRY1 and CRY2 in a ligand-dependent fashion. Interacts with CIART. Interacts with RWDD3. Interacts with UBE2I/UBC9 and this interaction is enhanced in the presence of RWDD3. Interacts with GRIP1. Interacts with NR4A3 (via nuclear receptor DNA-binding domain), represses transcription activity of NR4A3 on the POMC promoter Nur response element (NurRE). Directly interacts with PNRC2 to attract and form a complex with UPF1 and DCP1A; the interaction leads to rapid mRNA degradation. Interacts with GSK3B. Interacts with FNIP1 and FNIP2. Interacts (via C-terminus) with HNRNPU (via C-terminus). Interacts with MCM3AP (By similarity). Interacts (via domain NR LBD) with HSP90AA1 and HSP90AB1 (By similarity). In the absence of hormonal ligand, interacts with TACC1 (By similarity). Interacts (via NR LBD domain) with ZNF764 (via KRAB domain); the interaction regulates transcription factor activity of NR3C1 by directing its actions toward certain biologic pathways (By similarity).</text>
</comment>
<comment type="subcellular location">
    <subcellularLocation>
        <location evidence="2">Cytoplasm</location>
    </subcellularLocation>
    <subcellularLocation>
        <location evidence="2">Nucleus</location>
    </subcellularLocation>
    <subcellularLocation>
        <location evidence="2">Mitochondrion</location>
    </subcellularLocation>
    <subcellularLocation>
        <location evidence="2">Cytoplasm</location>
        <location evidence="2">Cytoskeleton</location>
        <location evidence="2">Spindle</location>
    </subcellularLocation>
    <subcellularLocation>
        <location evidence="2">Cytoplasm</location>
        <location evidence="2">Cytoskeleton</location>
        <location evidence="2">Microtubule organizing center</location>
        <location evidence="2">Centrosome</location>
    </subcellularLocation>
    <subcellularLocation>
        <location evidence="4">Chromosome</location>
    </subcellularLocation>
    <subcellularLocation>
        <location evidence="4">Nucleus</location>
        <location evidence="4">Nucleoplasm</location>
    </subcellularLocation>
    <text evidence="2 4">After ligand activation, translocates from the cytoplasm to the nucleus (By similarity). The hormone-occupied receptor undergoes rapid exchange between chromatin and the nucleoplasmic compartment. In the presence of NR1D1 shows a time-dependent subcellular localization, localizing to the cytoplasm at ZT8 and to the nucleus at ZT20. Lacks this diurnal pattern of localization in the absence of NR1D1, localizing to both nucleus and the cytoplasm at ZT8 and ZT20. Upon dexamethasone binding associates with the glucocorticoid response elements of target genes (By similarity).</text>
</comment>
<comment type="domain">
    <text evidence="2">Composed of three domains: a modulating N-terminal domain, a DNA-binding domain and a C-terminal ligand-binding domain. The ligand-binding domain is required for correct chromosome segregation during mitosis although ligand binding is not required.</text>
</comment>
<comment type="PTM">
    <text evidence="1">Acetylation by CLOCK reduces its binding to glucocorticoid response elements and its transcriptional activity.</text>
</comment>
<comment type="PTM">
    <text evidence="2">Increased proteasome-mediated degradation in response to glucocorticoids.</text>
</comment>
<comment type="PTM">
    <text evidence="2 4">Phosphorylated in the absence of hormone; becomes hyperphosphorylated in the presence of glucocorticoid. The Ser-203, Ser-226 and Ser-404-phosphorylated forms are mainly cytoplasmic, and the Ser-211-phosphorylated form is nuclear. Phosphorylation at Ser-211 increases transcriptional activity. Phosphorylation at Ser-203, Ser-226 and Ser-404 decreases signaling capacity. Phosphorylation at Ser-404 may protect from glucocorticoid-induced apoptosis. Phosphorylation at Ser-203 and Ser-211 is not required in regulation of chromosome segregation. May be dephosphorylated by PPP5C, attenuates NR3C1 action.</text>
</comment>
<comment type="PTM">
    <text evidence="4">Ubiquitinated by UBR5, leading to its degradation: UBR5 specifically recognizes and binds ligand-bound NR3C1 when it is not associated with coactivators (NCOAs) (By similarity). In presence of NCOAs, the UBR5-degron is not accessible, preventing its ubiquitination and degradation (By similarity).</text>
</comment>
<comment type="PTM">
    <text evidence="3">Sumoylation at Lys-277 and Lys-293 negatively regulates its transcriptional activity. Sumoylation at Lys-703 positively regulates its transcriptional activity in the presence of RWDD3. Sumoylation at Lys-277 and Lys-293 is dispensable whereas sumoylation at Lys-703 is critical for the stimulatory effect of RWDD3 on its transcriptional activity. Heat shock increases sumoylation in a RWDD3-dependent manner.</text>
</comment>
<comment type="similarity">
    <text evidence="8">Belongs to the nuclear hormone receptor family. NR3 subfamily.</text>
</comment>